<name>ACPS_STRPB</name>
<reference key="1">
    <citation type="journal article" date="2006" name="Proc. Natl. Acad. Sci. U.S.A.">
        <title>Molecular genetic anatomy of inter- and intraserotype variation in the human bacterial pathogen group A Streptococcus.</title>
        <authorList>
            <person name="Beres S.B."/>
            <person name="Richter E.W."/>
            <person name="Nagiec M.J."/>
            <person name="Sumby P."/>
            <person name="Porcella S.F."/>
            <person name="DeLeo F.R."/>
            <person name="Musser J.M."/>
        </authorList>
    </citation>
    <scope>NUCLEOTIDE SEQUENCE [LARGE SCALE GENOMIC DNA]</scope>
    <source>
        <strain>MGAS2096</strain>
    </source>
</reference>
<accession>Q1JA49</accession>
<keyword id="KW-0963">Cytoplasm</keyword>
<keyword id="KW-0275">Fatty acid biosynthesis</keyword>
<keyword id="KW-0276">Fatty acid metabolism</keyword>
<keyword id="KW-0444">Lipid biosynthesis</keyword>
<keyword id="KW-0443">Lipid metabolism</keyword>
<keyword id="KW-0460">Magnesium</keyword>
<keyword id="KW-0479">Metal-binding</keyword>
<keyword id="KW-0808">Transferase</keyword>
<gene>
    <name evidence="1" type="primary">acpS</name>
    <name type="ordered locus">MGAS2096_Spy1560</name>
</gene>
<protein>
    <recommendedName>
        <fullName evidence="1">Holo-[acyl-carrier-protein] synthase</fullName>
        <shortName evidence="1">Holo-ACP synthase</shortName>
        <ecNumber evidence="1">2.7.8.7</ecNumber>
    </recommendedName>
    <alternativeName>
        <fullName evidence="1">4'-phosphopantetheinyl transferase AcpS</fullName>
    </alternativeName>
</protein>
<comment type="function">
    <text evidence="1">Transfers the 4'-phosphopantetheine moiety from coenzyme A to a Ser of acyl-carrier-protein.</text>
</comment>
<comment type="catalytic activity">
    <reaction evidence="1">
        <text>apo-[ACP] + CoA = holo-[ACP] + adenosine 3',5'-bisphosphate + H(+)</text>
        <dbReference type="Rhea" id="RHEA:12068"/>
        <dbReference type="Rhea" id="RHEA-COMP:9685"/>
        <dbReference type="Rhea" id="RHEA-COMP:9690"/>
        <dbReference type="ChEBI" id="CHEBI:15378"/>
        <dbReference type="ChEBI" id="CHEBI:29999"/>
        <dbReference type="ChEBI" id="CHEBI:57287"/>
        <dbReference type="ChEBI" id="CHEBI:58343"/>
        <dbReference type="ChEBI" id="CHEBI:64479"/>
        <dbReference type="EC" id="2.7.8.7"/>
    </reaction>
</comment>
<comment type="cofactor">
    <cofactor evidence="1">
        <name>Mg(2+)</name>
        <dbReference type="ChEBI" id="CHEBI:18420"/>
    </cofactor>
</comment>
<comment type="subcellular location">
    <subcellularLocation>
        <location evidence="1">Cytoplasm</location>
    </subcellularLocation>
</comment>
<comment type="similarity">
    <text evidence="1">Belongs to the P-Pant transferase superfamily. AcpS family.</text>
</comment>
<dbReference type="EC" id="2.7.8.7" evidence="1"/>
<dbReference type="EMBL" id="CP000261">
    <property type="protein sequence ID" value="ABF36612.1"/>
    <property type="molecule type" value="Genomic_DNA"/>
</dbReference>
<dbReference type="SMR" id="Q1JA49"/>
<dbReference type="KEGG" id="spj:MGAS2096_Spy1560"/>
<dbReference type="HOGENOM" id="CLU_089696_1_2_9"/>
<dbReference type="GO" id="GO:0005737">
    <property type="term" value="C:cytoplasm"/>
    <property type="evidence" value="ECO:0007669"/>
    <property type="project" value="UniProtKB-SubCell"/>
</dbReference>
<dbReference type="GO" id="GO:0008897">
    <property type="term" value="F:holo-[acyl-carrier-protein] synthase activity"/>
    <property type="evidence" value="ECO:0007669"/>
    <property type="project" value="UniProtKB-UniRule"/>
</dbReference>
<dbReference type="GO" id="GO:0000287">
    <property type="term" value="F:magnesium ion binding"/>
    <property type="evidence" value="ECO:0007669"/>
    <property type="project" value="UniProtKB-UniRule"/>
</dbReference>
<dbReference type="GO" id="GO:0006633">
    <property type="term" value="P:fatty acid biosynthetic process"/>
    <property type="evidence" value="ECO:0007669"/>
    <property type="project" value="UniProtKB-UniRule"/>
</dbReference>
<dbReference type="Gene3D" id="3.90.470.20">
    <property type="entry name" value="4'-phosphopantetheinyl transferase domain"/>
    <property type="match status" value="1"/>
</dbReference>
<dbReference type="HAMAP" id="MF_00101">
    <property type="entry name" value="AcpS"/>
    <property type="match status" value="1"/>
</dbReference>
<dbReference type="InterPro" id="IPR008278">
    <property type="entry name" value="4-PPantetheinyl_Trfase_dom"/>
</dbReference>
<dbReference type="InterPro" id="IPR037143">
    <property type="entry name" value="4-PPantetheinyl_Trfase_dom_sf"/>
</dbReference>
<dbReference type="InterPro" id="IPR002582">
    <property type="entry name" value="ACPS"/>
</dbReference>
<dbReference type="InterPro" id="IPR004568">
    <property type="entry name" value="Ppantetheine-prot_Trfase_dom"/>
</dbReference>
<dbReference type="NCBIfam" id="TIGR00516">
    <property type="entry name" value="acpS"/>
    <property type="match status" value="1"/>
</dbReference>
<dbReference type="NCBIfam" id="TIGR00556">
    <property type="entry name" value="pantethn_trn"/>
    <property type="match status" value="1"/>
</dbReference>
<dbReference type="Pfam" id="PF01648">
    <property type="entry name" value="ACPS"/>
    <property type="match status" value="1"/>
</dbReference>
<dbReference type="SUPFAM" id="SSF56214">
    <property type="entry name" value="4'-phosphopantetheinyl transferase"/>
    <property type="match status" value="1"/>
</dbReference>
<organism>
    <name type="scientific">Streptococcus pyogenes serotype M12 (strain MGAS2096)</name>
    <dbReference type="NCBI Taxonomy" id="370553"/>
    <lineage>
        <taxon>Bacteria</taxon>
        <taxon>Bacillati</taxon>
        <taxon>Bacillota</taxon>
        <taxon>Bacilli</taxon>
        <taxon>Lactobacillales</taxon>
        <taxon>Streptococcaceae</taxon>
        <taxon>Streptococcus</taxon>
    </lineage>
</organism>
<evidence type="ECO:0000255" key="1">
    <source>
        <dbReference type="HAMAP-Rule" id="MF_00101"/>
    </source>
</evidence>
<feature type="chain" id="PRO_1000008510" description="Holo-[acyl-carrier-protein] synthase">
    <location>
        <begin position="1"/>
        <end position="118"/>
    </location>
</feature>
<feature type="binding site" evidence="1">
    <location>
        <position position="8"/>
    </location>
    <ligand>
        <name>Mg(2+)</name>
        <dbReference type="ChEBI" id="CHEBI:18420"/>
    </ligand>
</feature>
<feature type="binding site" evidence="1">
    <location>
        <position position="58"/>
    </location>
    <ligand>
        <name>Mg(2+)</name>
        <dbReference type="ChEBI" id="CHEBI:18420"/>
    </ligand>
</feature>
<proteinExistence type="inferred from homology"/>
<sequence length="118" mass="13290">MIVGHGIDLQEISAIEKVYQRNPRFAQKILTEQELAIFESFPYKRRLSYLAGRWSGKEAFVKAIGTGIGRLTFQDIEILNDVRGCPILTKSPFKGNSFISISHSGNYVQASVILEDKK</sequence>